<proteinExistence type="inferred from homology"/>
<protein>
    <recommendedName>
        <fullName evidence="1">UPF0342 protein BcerKBAB4_0767</fullName>
    </recommendedName>
</protein>
<gene>
    <name type="ordered locus">BcerKBAB4_0767</name>
</gene>
<reference key="1">
    <citation type="journal article" date="2008" name="Chem. Biol. Interact.">
        <title>Extending the Bacillus cereus group genomics to putative food-borne pathogens of different toxicity.</title>
        <authorList>
            <person name="Lapidus A."/>
            <person name="Goltsman E."/>
            <person name="Auger S."/>
            <person name="Galleron N."/>
            <person name="Segurens B."/>
            <person name="Dossat C."/>
            <person name="Land M.L."/>
            <person name="Broussolle V."/>
            <person name="Brillard J."/>
            <person name="Guinebretiere M.-H."/>
            <person name="Sanchis V."/>
            <person name="Nguen-the C."/>
            <person name="Lereclus D."/>
            <person name="Richardson P."/>
            <person name="Wincker P."/>
            <person name="Weissenbach J."/>
            <person name="Ehrlich S.D."/>
            <person name="Sorokin A."/>
        </authorList>
    </citation>
    <scope>NUCLEOTIDE SEQUENCE [LARGE SCALE GENOMIC DNA]</scope>
    <source>
        <strain>KBAB4</strain>
    </source>
</reference>
<accession>A9VGI1</accession>
<name>Y767_BACMK</name>
<organism>
    <name type="scientific">Bacillus mycoides (strain KBAB4)</name>
    <name type="common">Bacillus weihenstephanensis</name>
    <dbReference type="NCBI Taxonomy" id="315730"/>
    <lineage>
        <taxon>Bacteria</taxon>
        <taxon>Bacillati</taxon>
        <taxon>Bacillota</taxon>
        <taxon>Bacilli</taxon>
        <taxon>Bacillales</taxon>
        <taxon>Bacillaceae</taxon>
        <taxon>Bacillus</taxon>
        <taxon>Bacillus cereus group</taxon>
    </lineage>
</organism>
<sequence>MTKNIHDVAYELQKTIAENEDFQTLKASYAAVQGDAESKNLFEEFRAMQLGLQQKMMQGQEITEEDNQKAQEVVARIQQDAKITKLMETEQRLNIVITDVNKIIMKPLEELYSAQQA</sequence>
<dbReference type="EMBL" id="CP000903">
    <property type="protein sequence ID" value="ABY42027.1"/>
    <property type="molecule type" value="Genomic_DNA"/>
</dbReference>
<dbReference type="RefSeq" id="WP_002125511.1">
    <property type="nucleotide sequence ID" value="NC_010184.1"/>
</dbReference>
<dbReference type="SMR" id="A9VGI1"/>
<dbReference type="KEGG" id="bwe:BcerKBAB4_0767"/>
<dbReference type="eggNOG" id="COG3679">
    <property type="taxonomic scope" value="Bacteria"/>
</dbReference>
<dbReference type="HOGENOM" id="CLU_140243_3_0_9"/>
<dbReference type="Proteomes" id="UP000002154">
    <property type="component" value="Chromosome"/>
</dbReference>
<dbReference type="Gene3D" id="1.20.1500.10">
    <property type="entry name" value="YheA/YmcA-like"/>
    <property type="match status" value="1"/>
</dbReference>
<dbReference type="HAMAP" id="MF_01526">
    <property type="entry name" value="UPF0342"/>
    <property type="match status" value="1"/>
</dbReference>
<dbReference type="InterPro" id="IPR010368">
    <property type="entry name" value="Com_YlbF"/>
</dbReference>
<dbReference type="InterPro" id="IPR023378">
    <property type="entry name" value="YheA/YmcA-like_dom_sf"/>
</dbReference>
<dbReference type="NCBIfam" id="NF010211">
    <property type="entry name" value="PRK13676.1-4"/>
    <property type="match status" value="1"/>
</dbReference>
<dbReference type="Pfam" id="PF06133">
    <property type="entry name" value="Com_YlbF"/>
    <property type="match status" value="1"/>
</dbReference>
<dbReference type="SUPFAM" id="SSF158622">
    <property type="entry name" value="YheA/YmcA-like"/>
    <property type="match status" value="1"/>
</dbReference>
<feature type="chain" id="PRO_1000198522" description="UPF0342 protein BcerKBAB4_0767">
    <location>
        <begin position="1"/>
        <end position="117"/>
    </location>
</feature>
<evidence type="ECO:0000255" key="1">
    <source>
        <dbReference type="HAMAP-Rule" id="MF_01526"/>
    </source>
</evidence>
<comment type="similarity">
    <text evidence="1">Belongs to the UPF0342 family.</text>
</comment>